<evidence type="ECO:0000250" key="1"/>
<evidence type="ECO:0000255" key="2">
    <source>
        <dbReference type="PROSITE-ProRule" id="PRU00227"/>
    </source>
</evidence>
<evidence type="ECO:0000256" key="3">
    <source>
        <dbReference type="SAM" id="MobiDB-lite"/>
    </source>
</evidence>
<evidence type="ECO:0000305" key="4"/>
<proteinExistence type="inferred from homology"/>
<keyword id="KW-0963">Cytoplasm</keyword>
<keyword id="KW-0238">DNA-binding</keyword>
<keyword id="KW-0479">Metal-binding</keyword>
<keyword id="KW-0496">Mitochondrion</keyword>
<keyword id="KW-0539">Nucleus</keyword>
<keyword id="KW-1185">Reference proteome</keyword>
<keyword id="KW-0678">Repressor</keyword>
<keyword id="KW-0804">Transcription</keyword>
<keyword id="KW-0805">Transcription regulation</keyword>
<keyword id="KW-0862">Zinc</keyword>
<comment type="function">
    <text evidence="1">Transcriptional inhibitor with a significantly increased number of target genes in response to oleate.</text>
</comment>
<comment type="subcellular location">
    <subcellularLocation>
        <location evidence="1">Cytoplasm</location>
    </subcellularLocation>
    <subcellularLocation>
        <location evidence="2">Nucleus</location>
    </subcellularLocation>
    <subcellularLocation>
        <location evidence="1">Mitochondrion</location>
    </subcellularLocation>
</comment>
<comment type="similarity">
    <text evidence="4">Belongs to the OAF3 family.</text>
</comment>
<protein>
    <recommendedName>
        <fullName>Oleate activated transcription factor 3</fullName>
    </recommendedName>
</protein>
<dbReference type="EMBL" id="DS480388">
    <property type="protein sequence ID" value="EDO18515.1"/>
    <property type="molecule type" value="Genomic_DNA"/>
</dbReference>
<dbReference type="RefSeq" id="XP_001646373.1">
    <property type="nucleotide sequence ID" value="XM_001646323.1"/>
</dbReference>
<dbReference type="SMR" id="A7TGQ2"/>
<dbReference type="FunCoup" id="A7TGQ2">
    <property type="interactions" value="207"/>
</dbReference>
<dbReference type="STRING" id="436907.A7TGQ2"/>
<dbReference type="GeneID" id="5546805"/>
<dbReference type="KEGG" id="vpo:Kpol_2001p16"/>
<dbReference type="eggNOG" id="ENOG502QQCV">
    <property type="taxonomic scope" value="Eukaryota"/>
</dbReference>
<dbReference type="HOGENOM" id="CLU_018684_0_0_1"/>
<dbReference type="InParanoid" id="A7TGQ2"/>
<dbReference type="OMA" id="WCAPEDG"/>
<dbReference type="OrthoDB" id="2406834at2759"/>
<dbReference type="PhylomeDB" id="A7TGQ2"/>
<dbReference type="Proteomes" id="UP000000267">
    <property type="component" value="Unassembled WGS sequence"/>
</dbReference>
<dbReference type="GO" id="GO:0005739">
    <property type="term" value="C:mitochondrion"/>
    <property type="evidence" value="ECO:0007669"/>
    <property type="project" value="UniProtKB-SubCell"/>
</dbReference>
<dbReference type="GO" id="GO:0005634">
    <property type="term" value="C:nucleus"/>
    <property type="evidence" value="ECO:0007669"/>
    <property type="project" value="UniProtKB-SubCell"/>
</dbReference>
<dbReference type="GO" id="GO:0000981">
    <property type="term" value="F:DNA-binding transcription factor activity, RNA polymerase II-specific"/>
    <property type="evidence" value="ECO:0007669"/>
    <property type="project" value="InterPro"/>
</dbReference>
<dbReference type="GO" id="GO:0000978">
    <property type="term" value="F:RNA polymerase II cis-regulatory region sequence-specific DNA binding"/>
    <property type="evidence" value="ECO:0007669"/>
    <property type="project" value="TreeGrafter"/>
</dbReference>
<dbReference type="GO" id="GO:0008270">
    <property type="term" value="F:zinc ion binding"/>
    <property type="evidence" value="ECO:0007669"/>
    <property type="project" value="InterPro"/>
</dbReference>
<dbReference type="GO" id="GO:0045944">
    <property type="term" value="P:positive regulation of transcription by RNA polymerase II"/>
    <property type="evidence" value="ECO:0007669"/>
    <property type="project" value="TreeGrafter"/>
</dbReference>
<dbReference type="CDD" id="cd12148">
    <property type="entry name" value="fungal_TF_MHR"/>
    <property type="match status" value="1"/>
</dbReference>
<dbReference type="CDD" id="cd00067">
    <property type="entry name" value="GAL4"/>
    <property type="match status" value="1"/>
</dbReference>
<dbReference type="Gene3D" id="4.10.240.10">
    <property type="entry name" value="Zn(2)-C6 fungal-type DNA-binding domain"/>
    <property type="match status" value="1"/>
</dbReference>
<dbReference type="InterPro" id="IPR050675">
    <property type="entry name" value="OAF3"/>
</dbReference>
<dbReference type="InterPro" id="IPR036864">
    <property type="entry name" value="Zn2-C6_fun-type_DNA-bd_sf"/>
</dbReference>
<dbReference type="InterPro" id="IPR001138">
    <property type="entry name" value="Zn2Cys6_DnaBD"/>
</dbReference>
<dbReference type="PANTHER" id="PTHR31069:SF33">
    <property type="entry name" value="OLEATE ACTIVATED TRANSCRIPTION FACTOR 3"/>
    <property type="match status" value="1"/>
</dbReference>
<dbReference type="PANTHER" id="PTHR31069">
    <property type="entry name" value="OLEATE-ACTIVATED TRANSCRIPTION FACTOR 1-RELATED"/>
    <property type="match status" value="1"/>
</dbReference>
<dbReference type="Pfam" id="PF00172">
    <property type="entry name" value="Zn_clus"/>
    <property type="match status" value="1"/>
</dbReference>
<dbReference type="SMART" id="SM00066">
    <property type="entry name" value="GAL4"/>
    <property type="match status" value="1"/>
</dbReference>
<dbReference type="SUPFAM" id="SSF57701">
    <property type="entry name" value="Zn2/Cys6 DNA-binding domain"/>
    <property type="match status" value="1"/>
</dbReference>
<dbReference type="PROSITE" id="PS00463">
    <property type="entry name" value="ZN2_CY6_FUNGAL_1"/>
    <property type="match status" value="1"/>
</dbReference>
<dbReference type="PROSITE" id="PS50048">
    <property type="entry name" value="ZN2_CY6_FUNGAL_2"/>
    <property type="match status" value="1"/>
</dbReference>
<gene>
    <name type="primary">OAF3</name>
    <name type="ORF">Kpol_2001p16</name>
</gene>
<sequence>MDMNENKVRKKRHRITVVCTNCKKRKSKCDRGKPCSNCTRIGIENSCLYIKDTPSLPIDSIGSVADLTASELQIPNFIPIHPSYNKEYVNYIPNGRFFEIKRSAYTMFPIFTDACIEHRDAVIKAFTTFRTIVVKKTIDHYRKTGIDIERIALAGSQGLPKSFLPLTVFDEESSKNLVLEQQEPQQSYQIHSLLAEKFSHYRKNANLKLGDDSTTVYHNLIIKSLPDLGLLMDTIIPYYEQFIEPLVPIIEFKDFNVEIQKLYAKIELSNSLDPKIGENTLACIILLICRLCHLSSKFAVEKSINSSNYESILNMDTNIFVSLVQRTATGEKPLRKGTLYELQLLIMLRLCYWVGPDDGDGQQVEQSEILHGAIVSMCKHMGVWWDLVKYSEDSDLFITVDYKAVPKLGSQSEYIKLFRKIWCYVLCWDRKMMLLTGQECEIGRSYKMSPAPRFGNGWCDDILQYDYLLYGINNELHDDARKVDISMLEELVEMSEMRMGVLKEDDFSSNIYREQKLSLMLMKLNIIHGQLSWYERTGDKQSQETAYAKLFTLTVELGSKCVEYFSTPGIPEQRFYMNKIYEVILNRLNNVIVPGLILRIRYEEETGLDGMVKYLYGMSSMYFNEIGKEYYRTFKKMFHGKINYKILENGHRCMDMIIKFLQREMQNNNDTAVSKGDSMKLSDRLPLVAWDSNSTNDMFEPIHTVPRGPEIAALILEMVNVSDRYHYNNNVFQTVYKEARLVIDETTTTSQQDSLASAGTNRTNNIATNSGSGDDGGNGSDDSYLMRLIQELFDPLDFASAF</sequence>
<feature type="chain" id="PRO_0000409041" description="Oleate activated transcription factor 3">
    <location>
        <begin position="1"/>
        <end position="802"/>
    </location>
</feature>
<feature type="DNA-binding region" description="Zn(2)-C6 fungal-type" evidence="2">
    <location>
        <begin position="19"/>
        <end position="47"/>
    </location>
</feature>
<feature type="region of interest" description="Disordered" evidence="3">
    <location>
        <begin position="749"/>
        <end position="779"/>
    </location>
</feature>
<feature type="compositionally biased region" description="Polar residues" evidence="3">
    <location>
        <begin position="749"/>
        <end position="768"/>
    </location>
</feature>
<organism>
    <name type="scientific">Vanderwaltozyma polyspora (strain ATCC 22028 / DSM 70294 / BCRC 21397 / CBS 2163 / NBRC 10782 / NRRL Y-8283 / UCD 57-17)</name>
    <name type="common">Kluyveromyces polysporus</name>
    <dbReference type="NCBI Taxonomy" id="436907"/>
    <lineage>
        <taxon>Eukaryota</taxon>
        <taxon>Fungi</taxon>
        <taxon>Dikarya</taxon>
        <taxon>Ascomycota</taxon>
        <taxon>Saccharomycotina</taxon>
        <taxon>Saccharomycetes</taxon>
        <taxon>Saccharomycetales</taxon>
        <taxon>Saccharomycetaceae</taxon>
        <taxon>Vanderwaltozyma</taxon>
    </lineage>
</organism>
<name>OAF3_VANPO</name>
<reference key="1">
    <citation type="journal article" date="2007" name="Proc. Natl. Acad. Sci. U.S.A.">
        <title>Independent sorting-out of thousands of duplicated gene pairs in two yeast species descended from a whole-genome duplication.</title>
        <authorList>
            <person name="Scannell D.R."/>
            <person name="Frank A.C."/>
            <person name="Conant G.C."/>
            <person name="Byrne K.P."/>
            <person name="Woolfit M."/>
            <person name="Wolfe K.H."/>
        </authorList>
    </citation>
    <scope>NUCLEOTIDE SEQUENCE [LARGE SCALE GENOMIC DNA]</scope>
    <source>
        <strain>ATCC 22028 / DSM 70294 / BCRC 21397 / CBS 2163 / NBRC 10782 / NRRL Y-8283 / UCD 57-17</strain>
    </source>
</reference>
<accession>A7TGQ2</accession>